<organism>
    <name type="scientific">Shewanella sp. (strain MR-4)</name>
    <dbReference type="NCBI Taxonomy" id="60480"/>
    <lineage>
        <taxon>Bacteria</taxon>
        <taxon>Pseudomonadati</taxon>
        <taxon>Pseudomonadota</taxon>
        <taxon>Gammaproteobacteria</taxon>
        <taxon>Alteromonadales</taxon>
        <taxon>Shewanellaceae</taxon>
        <taxon>Shewanella</taxon>
    </lineage>
</organism>
<keyword id="KW-0067">ATP-binding</keyword>
<keyword id="KW-0963">Cytoplasm</keyword>
<keyword id="KW-1015">Disulfide bond</keyword>
<keyword id="KW-0547">Nucleotide-binding</keyword>
<keyword id="KW-0676">Redox-active center</keyword>
<keyword id="KW-0694">RNA-binding</keyword>
<keyword id="KW-0784">Thiamine biosynthesis</keyword>
<keyword id="KW-0808">Transferase</keyword>
<keyword id="KW-0820">tRNA-binding</keyword>
<gene>
    <name evidence="1" type="primary">thiI</name>
    <name type="ordered locus">Shewmr4_2726</name>
</gene>
<name>THII_SHESM</name>
<reference key="1">
    <citation type="submission" date="2006-08" db="EMBL/GenBank/DDBJ databases">
        <title>Complete sequence of Shewanella sp. MR-4.</title>
        <authorList>
            <consortium name="US DOE Joint Genome Institute"/>
            <person name="Copeland A."/>
            <person name="Lucas S."/>
            <person name="Lapidus A."/>
            <person name="Barry K."/>
            <person name="Detter J.C."/>
            <person name="Glavina del Rio T."/>
            <person name="Hammon N."/>
            <person name="Israni S."/>
            <person name="Dalin E."/>
            <person name="Tice H."/>
            <person name="Pitluck S."/>
            <person name="Kiss H."/>
            <person name="Brettin T."/>
            <person name="Bruce D."/>
            <person name="Han C."/>
            <person name="Tapia R."/>
            <person name="Gilna P."/>
            <person name="Schmutz J."/>
            <person name="Larimer F."/>
            <person name="Land M."/>
            <person name="Hauser L."/>
            <person name="Kyrpides N."/>
            <person name="Mikhailova N."/>
            <person name="Nealson K."/>
            <person name="Konstantinidis K."/>
            <person name="Klappenbach J."/>
            <person name="Tiedje J."/>
            <person name="Richardson P."/>
        </authorList>
    </citation>
    <scope>NUCLEOTIDE SEQUENCE [LARGE SCALE GENOMIC DNA]</scope>
    <source>
        <strain>MR-4</strain>
    </source>
</reference>
<feature type="chain" id="PRO_1000074274" description="tRNA sulfurtransferase">
    <location>
        <begin position="1"/>
        <end position="484"/>
    </location>
</feature>
<feature type="domain" description="THUMP" evidence="1">
    <location>
        <begin position="63"/>
        <end position="167"/>
    </location>
</feature>
<feature type="domain" description="Rhodanese" evidence="1">
    <location>
        <begin position="406"/>
        <end position="484"/>
    </location>
</feature>
<feature type="active site" description="Cysteine persulfide intermediate" evidence="1">
    <location>
        <position position="458"/>
    </location>
</feature>
<feature type="binding site" evidence="1">
    <location>
        <begin position="185"/>
        <end position="186"/>
    </location>
    <ligand>
        <name>ATP</name>
        <dbReference type="ChEBI" id="CHEBI:30616"/>
    </ligand>
</feature>
<feature type="binding site" evidence="1">
    <location>
        <position position="267"/>
    </location>
    <ligand>
        <name>ATP</name>
        <dbReference type="ChEBI" id="CHEBI:30616"/>
    </ligand>
</feature>
<feature type="binding site" evidence="1">
    <location>
        <position position="289"/>
    </location>
    <ligand>
        <name>ATP</name>
        <dbReference type="ChEBI" id="CHEBI:30616"/>
    </ligand>
</feature>
<feature type="binding site" evidence="1">
    <location>
        <position position="298"/>
    </location>
    <ligand>
        <name>ATP</name>
        <dbReference type="ChEBI" id="CHEBI:30616"/>
    </ligand>
</feature>
<feature type="disulfide bond" description="Redox-active" evidence="1">
    <location>
        <begin position="346"/>
        <end position="458"/>
    </location>
</feature>
<dbReference type="EC" id="2.8.1.4" evidence="1"/>
<dbReference type="EMBL" id="CP000446">
    <property type="protein sequence ID" value="ABI39797.1"/>
    <property type="molecule type" value="Genomic_DNA"/>
</dbReference>
<dbReference type="RefSeq" id="WP_011623477.1">
    <property type="nucleotide sequence ID" value="NC_008321.1"/>
</dbReference>
<dbReference type="SMR" id="Q0HGM0"/>
<dbReference type="KEGG" id="she:Shewmr4_2726"/>
<dbReference type="HOGENOM" id="CLU_037952_4_1_6"/>
<dbReference type="UniPathway" id="UPA00060"/>
<dbReference type="GO" id="GO:0005829">
    <property type="term" value="C:cytosol"/>
    <property type="evidence" value="ECO:0007669"/>
    <property type="project" value="TreeGrafter"/>
</dbReference>
<dbReference type="GO" id="GO:0005524">
    <property type="term" value="F:ATP binding"/>
    <property type="evidence" value="ECO:0007669"/>
    <property type="project" value="UniProtKB-UniRule"/>
</dbReference>
<dbReference type="GO" id="GO:0004810">
    <property type="term" value="F:CCA tRNA nucleotidyltransferase activity"/>
    <property type="evidence" value="ECO:0007669"/>
    <property type="project" value="InterPro"/>
</dbReference>
<dbReference type="GO" id="GO:0000049">
    <property type="term" value="F:tRNA binding"/>
    <property type="evidence" value="ECO:0007669"/>
    <property type="project" value="UniProtKB-UniRule"/>
</dbReference>
<dbReference type="GO" id="GO:0140741">
    <property type="term" value="F:tRNA-uracil-4 sulfurtransferase activity"/>
    <property type="evidence" value="ECO:0007669"/>
    <property type="project" value="UniProtKB-EC"/>
</dbReference>
<dbReference type="GO" id="GO:0009228">
    <property type="term" value="P:thiamine biosynthetic process"/>
    <property type="evidence" value="ECO:0007669"/>
    <property type="project" value="UniProtKB-KW"/>
</dbReference>
<dbReference type="GO" id="GO:0009229">
    <property type="term" value="P:thiamine diphosphate biosynthetic process"/>
    <property type="evidence" value="ECO:0007669"/>
    <property type="project" value="UniProtKB-UniRule"/>
</dbReference>
<dbReference type="GO" id="GO:0052837">
    <property type="term" value="P:thiazole biosynthetic process"/>
    <property type="evidence" value="ECO:0007669"/>
    <property type="project" value="InterPro"/>
</dbReference>
<dbReference type="GO" id="GO:0002937">
    <property type="term" value="P:tRNA 4-thiouridine biosynthesis"/>
    <property type="evidence" value="ECO:0007669"/>
    <property type="project" value="TreeGrafter"/>
</dbReference>
<dbReference type="CDD" id="cd01712">
    <property type="entry name" value="PPase_ThiI"/>
    <property type="match status" value="1"/>
</dbReference>
<dbReference type="CDD" id="cd00158">
    <property type="entry name" value="RHOD"/>
    <property type="match status" value="1"/>
</dbReference>
<dbReference type="CDD" id="cd11716">
    <property type="entry name" value="THUMP_ThiI"/>
    <property type="match status" value="1"/>
</dbReference>
<dbReference type="FunFam" id="3.30.2130.30:FF:000002">
    <property type="entry name" value="tRNA sulfurtransferase"/>
    <property type="match status" value="1"/>
</dbReference>
<dbReference type="FunFam" id="3.40.250.10:FF:000003">
    <property type="entry name" value="tRNA sulfurtransferase"/>
    <property type="match status" value="1"/>
</dbReference>
<dbReference type="FunFam" id="3.40.50.620:FF:000029">
    <property type="entry name" value="tRNA sulfurtransferase"/>
    <property type="match status" value="1"/>
</dbReference>
<dbReference type="Gene3D" id="3.30.2130.30">
    <property type="match status" value="1"/>
</dbReference>
<dbReference type="Gene3D" id="3.40.50.620">
    <property type="entry name" value="HUPs"/>
    <property type="match status" value="1"/>
</dbReference>
<dbReference type="Gene3D" id="3.40.250.10">
    <property type="entry name" value="Rhodanese-like domain"/>
    <property type="match status" value="1"/>
</dbReference>
<dbReference type="HAMAP" id="MF_00021">
    <property type="entry name" value="ThiI"/>
    <property type="match status" value="1"/>
</dbReference>
<dbReference type="InterPro" id="IPR001763">
    <property type="entry name" value="Rhodanese-like_dom"/>
</dbReference>
<dbReference type="InterPro" id="IPR036873">
    <property type="entry name" value="Rhodanese-like_dom_sf"/>
</dbReference>
<dbReference type="InterPro" id="IPR014729">
    <property type="entry name" value="Rossmann-like_a/b/a_fold"/>
</dbReference>
<dbReference type="InterPro" id="IPR020536">
    <property type="entry name" value="ThiI_AANH"/>
</dbReference>
<dbReference type="InterPro" id="IPR054173">
    <property type="entry name" value="ThiI_fer"/>
</dbReference>
<dbReference type="InterPro" id="IPR049961">
    <property type="entry name" value="ThiI_N"/>
</dbReference>
<dbReference type="InterPro" id="IPR026340">
    <property type="entry name" value="THII_Thiazole_biosynth_dom"/>
</dbReference>
<dbReference type="InterPro" id="IPR004114">
    <property type="entry name" value="THUMP_dom"/>
</dbReference>
<dbReference type="InterPro" id="IPR049962">
    <property type="entry name" value="THUMP_ThiI"/>
</dbReference>
<dbReference type="InterPro" id="IPR003720">
    <property type="entry name" value="tRNA_STrfase"/>
</dbReference>
<dbReference type="InterPro" id="IPR050102">
    <property type="entry name" value="tRNA_sulfurtransferase_ThiI"/>
</dbReference>
<dbReference type="NCBIfam" id="TIGR04271">
    <property type="entry name" value="ThiI_C_thiazole"/>
    <property type="match status" value="1"/>
</dbReference>
<dbReference type="NCBIfam" id="TIGR00342">
    <property type="entry name" value="tRNA uracil 4-sulfurtransferase ThiI"/>
    <property type="match status" value="1"/>
</dbReference>
<dbReference type="PANTHER" id="PTHR43209">
    <property type="entry name" value="TRNA SULFURTRANSFERASE"/>
    <property type="match status" value="1"/>
</dbReference>
<dbReference type="PANTHER" id="PTHR43209:SF1">
    <property type="entry name" value="TRNA SULFURTRANSFERASE"/>
    <property type="match status" value="1"/>
</dbReference>
<dbReference type="Pfam" id="PF00581">
    <property type="entry name" value="Rhodanese"/>
    <property type="match status" value="1"/>
</dbReference>
<dbReference type="Pfam" id="PF02568">
    <property type="entry name" value="ThiI"/>
    <property type="match status" value="1"/>
</dbReference>
<dbReference type="Pfam" id="PF22025">
    <property type="entry name" value="ThiI_fer"/>
    <property type="match status" value="1"/>
</dbReference>
<dbReference type="Pfam" id="PF02926">
    <property type="entry name" value="THUMP"/>
    <property type="match status" value="1"/>
</dbReference>
<dbReference type="SMART" id="SM00981">
    <property type="entry name" value="THUMP"/>
    <property type="match status" value="1"/>
</dbReference>
<dbReference type="SUPFAM" id="SSF52402">
    <property type="entry name" value="Adenine nucleotide alpha hydrolases-like"/>
    <property type="match status" value="1"/>
</dbReference>
<dbReference type="SUPFAM" id="SSF52821">
    <property type="entry name" value="Rhodanese/Cell cycle control phosphatase"/>
    <property type="match status" value="1"/>
</dbReference>
<dbReference type="SUPFAM" id="SSF143437">
    <property type="entry name" value="THUMP domain-like"/>
    <property type="match status" value="1"/>
</dbReference>
<dbReference type="PROSITE" id="PS50206">
    <property type="entry name" value="RHODANESE_3"/>
    <property type="match status" value="1"/>
</dbReference>
<dbReference type="PROSITE" id="PS51165">
    <property type="entry name" value="THUMP"/>
    <property type="match status" value="1"/>
</dbReference>
<comment type="function">
    <text evidence="1">Catalyzes the ATP-dependent transfer of a sulfur to tRNA to produce 4-thiouridine in position 8 of tRNAs, which functions as a near-UV photosensor. Also catalyzes the transfer of sulfur to the sulfur carrier protein ThiS, forming ThiS-thiocarboxylate. This is a step in the synthesis of thiazole, in the thiamine biosynthesis pathway. The sulfur is donated as persulfide by IscS.</text>
</comment>
<comment type="catalytic activity">
    <reaction evidence="1">
        <text>[ThiI sulfur-carrier protein]-S-sulfanyl-L-cysteine + a uridine in tRNA + 2 reduced [2Fe-2S]-[ferredoxin] + ATP + H(+) = [ThiI sulfur-carrier protein]-L-cysteine + a 4-thiouridine in tRNA + 2 oxidized [2Fe-2S]-[ferredoxin] + AMP + diphosphate</text>
        <dbReference type="Rhea" id="RHEA:24176"/>
        <dbReference type="Rhea" id="RHEA-COMP:10000"/>
        <dbReference type="Rhea" id="RHEA-COMP:10001"/>
        <dbReference type="Rhea" id="RHEA-COMP:13337"/>
        <dbReference type="Rhea" id="RHEA-COMP:13338"/>
        <dbReference type="Rhea" id="RHEA-COMP:13339"/>
        <dbReference type="Rhea" id="RHEA-COMP:13340"/>
        <dbReference type="ChEBI" id="CHEBI:15378"/>
        <dbReference type="ChEBI" id="CHEBI:29950"/>
        <dbReference type="ChEBI" id="CHEBI:30616"/>
        <dbReference type="ChEBI" id="CHEBI:33019"/>
        <dbReference type="ChEBI" id="CHEBI:33737"/>
        <dbReference type="ChEBI" id="CHEBI:33738"/>
        <dbReference type="ChEBI" id="CHEBI:61963"/>
        <dbReference type="ChEBI" id="CHEBI:65315"/>
        <dbReference type="ChEBI" id="CHEBI:136798"/>
        <dbReference type="ChEBI" id="CHEBI:456215"/>
        <dbReference type="EC" id="2.8.1.4"/>
    </reaction>
</comment>
<comment type="catalytic activity">
    <reaction evidence="1">
        <text>[ThiS sulfur-carrier protein]-C-terminal Gly-Gly-AMP + S-sulfanyl-L-cysteinyl-[cysteine desulfurase] + AH2 = [ThiS sulfur-carrier protein]-C-terminal-Gly-aminoethanethioate + L-cysteinyl-[cysteine desulfurase] + A + AMP + 2 H(+)</text>
        <dbReference type="Rhea" id="RHEA:43340"/>
        <dbReference type="Rhea" id="RHEA-COMP:12157"/>
        <dbReference type="Rhea" id="RHEA-COMP:12158"/>
        <dbReference type="Rhea" id="RHEA-COMP:12910"/>
        <dbReference type="Rhea" id="RHEA-COMP:19908"/>
        <dbReference type="ChEBI" id="CHEBI:13193"/>
        <dbReference type="ChEBI" id="CHEBI:15378"/>
        <dbReference type="ChEBI" id="CHEBI:17499"/>
        <dbReference type="ChEBI" id="CHEBI:29950"/>
        <dbReference type="ChEBI" id="CHEBI:61963"/>
        <dbReference type="ChEBI" id="CHEBI:90618"/>
        <dbReference type="ChEBI" id="CHEBI:232372"/>
        <dbReference type="ChEBI" id="CHEBI:456215"/>
    </reaction>
</comment>
<comment type="pathway">
    <text evidence="1">Cofactor biosynthesis; thiamine diphosphate biosynthesis.</text>
</comment>
<comment type="subcellular location">
    <subcellularLocation>
        <location evidence="1">Cytoplasm</location>
    </subcellularLocation>
</comment>
<comment type="similarity">
    <text evidence="1">Belongs to the ThiI family.</text>
</comment>
<accession>Q0HGM0</accession>
<evidence type="ECO:0000255" key="1">
    <source>
        <dbReference type="HAMAP-Rule" id="MF_00021"/>
    </source>
</evidence>
<protein>
    <recommendedName>
        <fullName evidence="1">tRNA sulfurtransferase</fullName>
        <ecNumber evidence="1">2.8.1.4</ecNumber>
    </recommendedName>
    <alternativeName>
        <fullName evidence="1">Sulfur carrier protein ThiS sulfurtransferase</fullName>
    </alternativeName>
    <alternativeName>
        <fullName evidence="1">Thiamine biosynthesis protein ThiI</fullName>
    </alternativeName>
    <alternativeName>
        <fullName evidence="1">tRNA 4-thiouridine synthase</fullName>
    </alternativeName>
</protein>
<sequence>MKFIVKLYPEIMMKSKPVRMRFTKMLETNIRNVLKKVDEDAKVQRQWDRIWVKVPNDKPELAQAFGERLACIPGIAHVVQVDEYSFTSVDDIYQQVLPVYRDQIAGKTFCVRVKRTGSHDFNSIEVERYVGGGLNQFTDAIGVRLKNPEVTVNLEIEGDKLYMVTKRIEGLGGFPMATQEDVLSLISGGFDSGVSSYQFIKKGARTHYCFFNLGGAQHEIGVKQVAYHLWKTYGESHKVKFVSVPFEPVVAEILEKIDNGQMGVVLKRMMMRTAARIAERMGIQAIVTGESLGQVSSQTLTNLNVIDRCTDMLILRPLIAMDKQDIINECRRIGTEDFAKSMPEYCGVISQKPTVKAVLAKVEAEETKFSEDLIDRIVEQAVVIDIREIAEQMNTRITETETVVAIDTNEVVIDIRAPEEEENKPLEIEGVEIKRIPFFKLATQFADLDKQKTYLLYCERGVMSKLQALYLIEQGYHNVKVYRP</sequence>
<proteinExistence type="inferred from homology"/>